<accession>B0CJD0</accession>
<name>AROB_BRUSI</name>
<protein>
    <recommendedName>
        <fullName evidence="1">3-dehydroquinate synthase</fullName>
        <shortName evidence="1">DHQS</shortName>
        <ecNumber evidence="1">4.2.3.4</ecNumber>
    </recommendedName>
</protein>
<comment type="function">
    <text evidence="1">Catalyzes the conversion of 3-deoxy-D-arabino-heptulosonate 7-phosphate (DAHP) to dehydroquinate (DHQ).</text>
</comment>
<comment type="catalytic activity">
    <reaction evidence="1">
        <text>7-phospho-2-dehydro-3-deoxy-D-arabino-heptonate = 3-dehydroquinate + phosphate</text>
        <dbReference type="Rhea" id="RHEA:21968"/>
        <dbReference type="ChEBI" id="CHEBI:32364"/>
        <dbReference type="ChEBI" id="CHEBI:43474"/>
        <dbReference type="ChEBI" id="CHEBI:58394"/>
        <dbReference type="EC" id="4.2.3.4"/>
    </reaction>
</comment>
<comment type="cofactor">
    <cofactor evidence="1">
        <name>Co(2+)</name>
        <dbReference type="ChEBI" id="CHEBI:48828"/>
    </cofactor>
    <cofactor evidence="1">
        <name>Zn(2+)</name>
        <dbReference type="ChEBI" id="CHEBI:29105"/>
    </cofactor>
    <text evidence="1">Binds 1 divalent metal cation per subunit. Can use either Co(2+) or Zn(2+).</text>
</comment>
<comment type="cofactor">
    <cofactor evidence="1">
        <name>NAD(+)</name>
        <dbReference type="ChEBI" id="CHEBI:57540"/>
    </cofactor>
</comment>
<comment type="pathway">
    <text evidence="1">Metabolic intermediate biosynthesis; chorismate biosynthesis; chorismate from D-erythrose 4-phosphate and phosphoenolpyruvate: step 2/7.</text>
</comment>
<comment type="subcellular location">
    <subcellularLocation>
        <location evidence="1">Cytoplasm</location>
    </subcellularLocation>
</comment>
<comment type="similarity">
    <text evidence="1">Belongs to the sugar phosphate cyclases superfamily. Dehydroquinate synthase family.</text>
</comment>
<evidence type="ECO:0000255" key="1">
    <source>
        <dbReference type="HAMAP-Rule" id="MF_00110"/>
    </source>
</evidence>
<reference key="1">
    <citation type="submission" date="2007-12" db="EMBL/GenBank/DDBJ databases">
        <title>Brucella suis ATCC 23445 whole genome shotgun sequencing project.</title>
        <authorList>
            <person name="Setubal J.C."/>
            <person name="Bowns C."/>
            <person name="Boyle S."/>
            <person name="Crasta O.R."/>
            <person name="Czar M.J."/>
            <person name="Dharmanolla C."/>
            <person name="Gillespie J.J."/>
            <person name="Kenyon R.W."/>
            <person name="Lu J."/>
            <person name="Mane S."/>
            <person name="Mohapatra S."/>
            <person name="Nagrani S."/>
            <person name="Purkayastha A."/>
            <person name="Rajasimha H.K."/>
            <person name="Shallom J.M."/>
            <person name="Shallom S."/>
            <person name="Shukla M."/>
            <person name="Snyder E.E."/>
            <person name="Sobral B.W."/>
            <person name="Wattam A.R."/>
            <person name="Will R."/>
            <person name="Williams K."/>
            <person name="Yoo H."/>
            <person name="Bruce D."/>
            <person name="Detter C."/>
            <person name="Munk C."/>
            <person name="Brettin T.S."/>
        </authorList>
    </citation>
    <scope>NUCLEOTIDE SEQUENCE [LARGE SCALE GENOMIC DNA]</scope>
    <source>
        <strain>ATCC 23445 / NCTC 10510</strain>
    </source>
</reference>
<feature type="chain" id="PRO_1000094466" description="3-dehydroquinate synthase">
    <location>
        <begin position="1"/>
        <end position="378"/>
    </location>
</feature>
<feature type="binding site" evidence="1">
    <location>
        <begin position="115"/>
        <end position="119"/>
    </location>
    <ligand>
        <name>NAD(+)</name>
        <dbReference type="ChEBI" id="CHEBI:57540"/>
    </ligand>
</feature>
<feature type="binding site" evidence="1">
    <location>
        <begin position="139"/>
        <end position="140"/>
    </location>
    <ligand>
        <name>NAD(+)</name>
        <dbReference type="ChEBI" id="CHEBI:57540"/>
    </ligand>
</feature>
<feature type="binding site" evidence="1">
    <location>
        <position position="152"/>
    </location>
    <ligand>
        <name>NAD(+)</name>
        <dbReference type="ChEBI" id="CHEBI:57540"/>
    </ligand>
</feature>
<feature type="binding site" evidence="1">
    <location>
        <position position="161"/>
    </location>
    <ligand>
        <name>NAD(+)</name>
        <dbReference type="ChEBI" id="CHEBI:57540"/>
    </ligand>
</feature>
<feature type="binding site" evidence="1">
    <location>
        <position position="194"/>
    </location>
    <ligand>
        <name>Zn(2+)</name>
        <dbReference type="ChEBI" id="CHEBI:29105"/>
    </ligand>
</feature>
<feature type="binding site" evidence="1">
    <location>
        <position position="256"/>
    </location>
    <ligand>
        <name>Zn(2+)</name>
        <dbReference type="ChEBI" id="CHEBI:29105"/>
    </ligand>
</feature>
<feature type="binding site" evidence="1">
    <location>
        <position position="275"/>
    </location>
    <ligand>
        <name>Zn(2+)</name>
        <dbReference type="ChEBI" id="CHEBI:29105"/>
    </ligand>
</feature>
<organism>
    <name type="scientific">Brucella suis (strain ATCC 23445 / NCTC 10510)</name>
    <dbReference type="NCBI Taxonomy" id="470137"/>
    <lineage>
        <taxon>Bacteria</taxon>
        <taxon>Pseudomonadati</taxon>
        <taxon>Pseudomonadota</taxon>
        <taxon>Alphaproteobacteria</taxon>
        <taxon>Hyphomicrobiales</taxon>
        <taxon>Brucellaceae</taxon>
        <taxon>Brucella/Ochrobactrum group</taxon>
        <taxon>Brucella</taxon>
    </lineage>
</organism>
<dbReference type="EC" id="4.2.3.4" evidence="1"/>
<dbReference type="EMBL" id="CP000911">
    <property type="protein sequence ID" value="ABY38882.1"/>
    <property type="molecule type" value="Genomic_DNA"/>
</dbReference>
<dbReference type="RefSeq" id="WP_006071734.1">
    <property type="nucleotide sequence ID" value="NC_010169.1"/>
</dbReference>
<dbReference type="SMR" id="B0CJD0"/>
<dbReference type="KEGG" id="bmt:BSUIS_A1869"/>
<dbReference type="HOGENOM" id="CLU_001201_0_2_5"/>
<dbReference type="UniPathway" id="UPA00053">
    <property type="reaction ID" value="UER00085"/>
</dbReference>
<dbReference type="Proteomes" id="UP000008545">
    <property type="component" value="Chromosome I"/>
</dbReference>
<dbReference type="GO" id="GO:0005737">
    <property type="term" value="C:cytoplasm"/>
    <property type="evidence" value="ECO:0007669"/>
    <property type="project" value="UniProtKB-SubCell"/>
</dbReference>
<dbReference type="GO" id="GO:0003856">
    <property type="term" value="F:3-dehydroquinate synthase activity"/>
    <property type="evidence" value="ECO:0007669"/>
    <property type="project" value="UniProtKB-UniRule"/>
</dbReference>
<dbReference type="GO" id="GO:0046872">
    <property type="term" value="F:metal ion binding"/>
    <property type="evidence" value="ECO:0007669"/>
    <property type="project" value="UniProtKB-KW"/>
</dbReference>
<dbReference type="GO" id="GO:0000166">
    <property type="term" value="F:nucleotide binding"/>
    <property type="evidence" value="ECO:0007669"/>
    <property type="project" value="UniProtKB-KW"/>
</dbReference>
<dbReference type="GO" id="GO:0008652">
    <property type="term" value="P:amino acid biosynthetic process"/>
    <property type="evidence" value="ECO:0007669"/>
    <property type="project" value="UniProtKB-KW"/>
</dbReference>
<dbReference type="GO" id="GO:0009073">
    <property type="term" value="P:aromatic amino acid family biosynthetic process"/>
    <property type="evidence" value="ECO:0007669"/>
    <property type="project" value="UniProtKB-KW"/>
</dbReference>
<dbReference type="GO" id="GO:0009423">
    <property type="term" value="P:chorismate biosynthetic process"/>
    <property type="evidence" value="ECO:0007669"/>
    <property type="project" value="UniProtKB-UniRule"/>
</dbReference>
<dbReference type="CDD" id="cd08195">
    <property type="entry name" value="DHQS"/>
    <property type="match status" value="1"/>
</dbReference>
<dbReference type="FunFam" id="3.40.50.1970:FF:000007">
    <property type="entry name" value="Pentafunctional AROM polypeptide"/>
    <property type="match status" value="1"/>
</dbReference>
<dbReference type="Gene3D" id="3.40.50.1970">
    <property type="match status" value="1"/>
</dbReference>
<dbReference type="Gene3D" id="1.20.1090.10">
    <property type="entry name" value="Dehydroquinate synthase-like - alpha domain"/>
    <property type="match status" value="1"/>
</dbReference>
<dbReference type="HAMAP" id="MF_00110">
    <property type="entry name" value="DHQ_synthase"/>
    <property type="match status" value="1"/>
</dbReference>
<dbReference type="InterPro" id="IPR050071">
    <property type="entry name" value="Dehydroquinate_synthase"/>
</dbReference>
<dbReference type="InterPro" id="IPR016037">
    <property type="entry name" value="DHQ_synth_AroB"/>
</dbReference>
<dbReference type="InterPro" id="IPR030963">
    <property type="entry name" value="DHQ_synth_fam"/>
</dbReference>
<dbReference type="InterPro" id="IPR030960">
    <property type="entry name" value="DHQS/DOIS_N"/>
</dbReference>
<dbReference type="InterPro" id="IPR056179">
    <property type="entry name" value="DHQS_C"/>
</dbReference>
<dbReference type="NCBIfam" id="TIGR01357">
    <property type="entry name" value="aroB"/>
    <property type="match status" value="1"/>
</dbReference>
<dbReference type="PANTHER" id="PTHR43622">
    <property type="entry name" value="3-DEHYDROQUINATE SYNTHASE"/>
    <property type="match status" value="1"/>
</dbReference>
<dbReference type="PANTHER" id="PTHR43622:SF7">
    <property type="entry name" value="3-DEHYDROQUINATE SYNTHASE, CHLOROPLASTIC"/>
    <property type="match status" value="1"/>
</dbReference>
<dbReference type="Pfam" id="PF01761">
    <property type="entry name" value="DHQ_synthase"/>
    <property type="match status" value="1"/>
</dbReference>
<dbReference type="Pfam" id="PF24621">
    <property type="entry name" value="DHQS_C"/>
    <property type="match status" value="1"/>
</dbReference>
<dbReference type="PIRSF" id="PIRSF001455">
    <property type="entry name" value="DHQ_synth"/>
    <property type="match status" value="1"/>
</dbReference>
<dbReference type="SUPFAM" id="SSF56796">
    <property type="entry name" value="Dehydroquinate synthase-like"/>
    <property type="match status" value="1"/>
</dbReference>
<keyword id="KW-0028">Amino-acid biosynthesis</keyword>
<keyword id="KW-0057">Aromatic amino acid biosynthesis</keyword>
<keyword id="KW-0170">Cobalt</keyword>
<keyword id="KW-0963">Cytoplasm</keyword>
<keyword id="KW-0456">Lyase</keyword>
<keyword id="KW-0479">Metal-binding</keyword>
<keyword id="KW-0520">NAD</keyword>
<keyword id="KW-0547">Nucleotide-binding</keyword>
<keyword id="KW-0862">Zinc</keyword>
<proteinExistence type="inferred from homology"/>
<gene>
    <name evidence="1" type="primary">aroB</name>
    <name type="ordered locus">BSUIS_A1869</name>
</gene>
<sequence length="378" mass="39853">MNAPTTVADSVTVPVSLGDRSYDILIGKGLVERAGEEVAKRLKGVRVAIVTDENVAAVHLERLQASFARAGIDSTPVIVAPGEKSKSFATLETVTNAILAAKLERGDAVVALGGGVVGDLSGFVAGIVRRGMNFVQMPTSLLAQVDSSVGGKTGINTAHGKNLVGVFNQPQLVLADTQVLDTLSPREFRAGYAEIAKYGLIDRPDFFAWLEANWQEVFSGGAARTKAIAESCRSKAAVVARDERETGDRALLNLGHTFGHALESATGYDSSRLVHGEGVAIGMALAYRFSARMNLAGIEAAERVEAHLKAVGLPVSLAEVPGGLPPAEKLMDYIAQDKKVTRGTLTFILTHGIGQSFIAKDVPPAAVLEFLKERLAIA</sequence>